<feature type="chain" id="PRO_0000159514" description="Cysteine--tRNA ligase 1">
    <location>
        <begin position="1"/>
        <end position="466"/>
    </location>
</feature>
<feature type="short sequence motif" description="'HIGH' region">
    <location>
        <begin position="29"/>
        <end position="39"/>
    </location>
</feature>
<feature type="short sequence motif" description="'KMSKS' region">
    <location>
        <begin position="267"/>
        <end position="271"/>
    </location>
</feature>
<feature type="binding site" evidence="1">
    <location>
        <position position="27"/>
    </location>
    <ligand>
        <name>Zn(2+)</name>
        <dbReference type="ChEBI" id="CHEBI:29105"/>
    </ligand>
</feature>
<feature type="binding site" evidence="1">
    <location>
        <position position="211"/>
    </location>
    <ligand>
        <name>Zn(2+)</name>
        <dbReference type="ChEBI" id="CHEBI:29105"/>
    </ligand>
</feature>
<feature type="binding site" evidence="1">
    <location>
        <position position="236"/>
    </location>
    <ligand>
        <name>Zn(2+)</name>
        <dbReference type="ChEBI" id="CHEBI:29105"/>
    </ligand>
</feature>
<feature type="binding site" evidence="1">
    <location>
        <position position="240"/>
    </location>
    <ligand>
        <name>Zn(2+)</name>
        <dbReference type="ChEBI" id="CHEBI:29105"/>
    </ligand>
</feature>
<feature type="binding site" evidence="1">
    <location>
        <position position="270"/>
    </location>
    <ligand>
        <name>ATP</name>
        <dbReference type="ChEBI" id="CHEBI:30616"/>
    </ligand>
</feature>
<organism>
    <name type="scientific">Tropheryma whipplei (strain Twist)</name>
    <name type="common">Whipple's bacillus</name>
    <dbReference type="NCBI Taxonomy" id="203267"/>
    <lineage>
        <taxon>Bacteria</taxon>
        <taxon>Bacillati</taxon>
        <taxon>Actinomycetota</taxon>
        <taxon>Actinomycetes</taxon>
        <taxon>Micrococcales</taxon>
        <taxon>Tropherymataceae</taxon>
        <taxon>Tropheryma</taxon>
    </lineage>
</organism>
<keyword id="KW-0030">Aminoacyl-tRNA synthetase</keyword>
<keyword id="KW-0067">ATP-binding</keyword>
<keyword id="KW-0963">Cytoplasm</keyword>
<keyword id="KW-0436">Ligase</keyword>
<keyword id="KW-0479">Metal-binding</keyword>
<keyword id="KW-0547">Nucleotide-binding</keyword>
<keyword id="KW-0648">Protein biosynthesis</keyword>
<keyword id="KW-1185">Reference proteome</keyword>
<keyword id="KW-0862">Zinc</keyword>
<accession>Q83GF1</accession>
<name>SYC1_TROWT</name>
<gene>
    <name evidence="1" type="primary">cysS1</name>
    <name type="ordered locus">TWT_347</name>
</gene>
<reference key="1">
    <citation type="journal article" date="2003" name="Genome Res.">
        <title>Tropheryma whipplei twist: a human pathogenic Actinobacteria with a reduced genome.</title>
        <authorList>
            <person name="Raoult D."/>
            <person name="Ogata H."/>
            <person name="Audic S."/>
            <person name="Robert C."/>
            <person name="Suhre K."/>
            <person name="Drancourt M."/>
            <person name="Claverie J.-M."/>
        </authorList>
    </citation>
    <scope>NUCLEOTIDE SEQUENCE [LARGE SCALE GENOMIC DNA]</scope>
    <source>
        <strain>Twist</strain>
    </source>
</reference>
<dbReference type="EC" id="6.1.1.16" evidence="1"/>
<dbReference type="EMBL" id="AE014184">
    <property type="protein sequence ID" value="AAO44444.1"/>
    <property type="molecule type" value="Genomic_DNA"/>
</dbReference>
<dbReference type="SMR" id="Q83GF1"/>
<dbReference type="STRING" id="203267.TWT_347"/>
<dbReference type="KEGG" id="twh:TWT_347"/>
<dbReference type="eggNOG" id="COG0215">
    <property type="taxonomic scope" value="Bacteria"/>
</dbReference>
<dbReference type="HOGENOM" id="CLU_013528_0_1_11"/>
<dbReference type="OrthoDB" id="9815130at2"/>
<dbReference type="Proteomes" id="UP000002200">
    <property type="component" value="Chromosome"/>
</dbReference>
<dbReference type="GO" id="GO:0005829">
    <property type="term" value="C:cytosol"/>
    <property type="evidence" value="ECO:0007669"/>
    <property type="project" value="TreeGrafter"/>
</dbReference>
<dbReference type="GO" id="GO:0005524">
    <property type="term" value="F:ATP binding"/>
    <property type="evidence" value="ECO:0007669"/>
    <property type="project" value="UniProtKB-UniRule"/>
</dbReference>
<dbReference type="GO" id="GO:0004817">
    <property type="term" value="F:cysteine-tRNA ligase activity"/>
    <property type="evidence" value="ECO:0007669"/>
    <property type="project" value="UniProtKB-UniRule"/>
</dbReference>
<dbReference type="GO" id="GO:0008270">
    <property type="term" value="F:zinc ion binding"/>
    <property type="evidence" value="ECO:0007669"/>
    <property type="project" value="UniProtKB-UniRule"/>
</dbReference>
<dbReference type="GO" id="GO:0006423">
    <property type="term" value="P:cysteinyl-tRNA aminoacylation"/>
    <property type="evidence" value="ECO:0007669"/>
    <property type="project" value="UniProtKB-UniRule"/>
</dbReference>
<dbReference type="CDD" id="cd00672">
    <property type="entry name" value="CysRS_core"/>
    <property type="match status" value="1"/>
</dbReference>
<dbReference type="Gene3D" id="1.20.120.1910">
    <property type="entry name" value="Cysteine-tRNA ligase, C-terminal anti-codon recognition domain"/>
    <property type="match status" value="1"/>
</dbReference>
<dbReference type="Gene3D" id="3.40.50.620">
    <property type="entry name" value="HUPs"/>
    <property type="match status" value="1"/>
</dbReference>
<dbReference type="HAMAP" id="MF_00041">
    <property type="entry name" value="Cys_tRNA_synth"/>
    <property type="match status" value="1"/>
</dbReference>
<dbReference type="InterPro" id="IPR015803">
    <property type="entry name" value="Cys-tRNA-ligase"/>
</dbReference>
<dbReference type="InterPro" id="IPR015273">
    <property type="entry name" value="Cys-tRNA-synt_Ia_DALR"/>
</dbReference>
<dbReference type="InterPro" id="IPR024909">
    <property type="entry name" value="Cys-tRNA/MSH_ligase"/>
</dbReference>
<dbReference type="InterPro" id="IPR014729">
    <property type="entry name" value="Rossmann-like_a/b/a_fold"/>
</dbReference>
<dbReference type="InterPro" id="IPR032678">
    <property type="entry name" value="tRNA-synt_1_cat_dom"/>
</dbReference>
<dbReference type="InterPro" id="IPR009080">
    <property type="entry name" value="tRNAsynth_Ia_anticodon-bd"/>
</dbReference>
<dbReference type="NCBIfam" id="TIGR00435">
    <property type="entry name" value="cysS"/>
    <property type="match status" value="1"/>
</dbReference>
<dbReference type="PANTHER" id="PTHR10890:SF30">
    <property type="entry name" value="CYSTEINE--TRNA LIGASE"/>
    <property type="match status" value="1"/>
</dbReference>
<dbReference type="PANTHER" id="PTHR10890">
    <property type="entry name" value="CYSTEINYL-TRNA SYNTHETASE"/>
    <property type="match status" value="1"/>
</dbReference>
<dbReference type="Pfam" id="PF09190">
    <property type="entry name" value="DALR_2"/>
    <property type="match status" value="1"/>
</dbReference>
<dbReference type="Pfam" id="PF01406">
    <property type="entry name" value="tRNA-synt_1e"/>
    <property type="match status" value="1"/>
</dbReference>
<dbReference type="PRINTS" id="PR00983">
    <property type="entry name" value="TRNASYNTHCYS"/>
</dbReference>
<dbReference type="SUPFAM" id="SSF47323">
    <property type="entry name" value="Anticodon-binding domain of a subclass of class I aminoacyl-tRNA synthetases"/>
    <property type="match status" value="1"/>
</dbReference>
<dbReference type="SUPFAM" id="SSF52374">
    <property type="entry name" value="Nucleotidylyl transferase"/>
    <property type="match status" value="1"/>
</dbReference>
<protein>
    <recommendedName>
        <fullName evidence="1">Cysteine--tRNA ligase 1</fullName>
        <ecNumber evidence="1">6.1.1.16</ecNumber>
    </recommendedName>
    <alternativeName>
        <fullName evidence="1">Cysteinyl-tRNA synthetase 1</fullName>
        <shortName evidence="1">CysRS 1</shortName>
    </alternativeName>
</protein>
<sequence>MTLNLYDTLSRRIVTLDCRDRVELYVCGPTVQSPPHIGHMRSGVVYDCLRRWLEYKGLPVLYVRNITDIDDKILASARSTETGETWWQIAYRVSGLFNEAYKALFVKPPDYEPLVTAHIPDIIKAIEILIQKNVAYRAMDGSGNVFFSIDKHPSYGELTDQKDLLIDDCITPGKRDPRDFTLWKEKKDTDPDLAFWESPWGPGRPGWHIECSVMATKYLGTRFAIHGGGVDLRFPHHENELAQARALGAHFADIWMHTGAVNVEGIKMSKSFGNSVLVQDALSKVSPSALRYYFLTAHYRSTLNYTENSLSQACNTWNKLQGCIYRVYDYLEREGYENDFCVSQLNTDFSTSLDNDLNIPEALAIVHNKVREMNRLVDTQADMQYLGNTLSEVVEMLSILCPIDHKITYTSGAQDNSKALLQVLLEARDRARSKGDFYTSDLLRELLAEADISVSDGHVSYGSPRG</sequence>
<proteinExistence type="inferred from homology"/>
<evidence type="ECO:0000255" key="1">
    <source>
        <dbReference type="HAMAP-Rule" id="MF_00041"/>
    </source>
</evidence>
<comment type="catalytic activity">
    <reaction evidence="1">
        <text>tRNA(Cys) + L-cysteine + ATP = L-cysteinyl-tRNA(Cys) + AMP + diphosphate</text>
        <dbReference type="Rhea" id="RHEA:17773"/>
        <dbReference type="Rhea" id="RHEA-COMP:9661"/>
        <dbReference type="Rhea" id="RHEA-COMP:9679"/>
        <dbReference type="ChEBI" id="CHEBI:30616"/>
        <dbReference type="ChEBI" id="CHEBI:33019"/>
        <dbReference type="ChEBI" id="CHEBI:35235"/>
        <dbReference type="ChEBI" id="CHEBI:78442"/>
        <dbReference type="ChEBI" id="CHEBI:78517"/>
        <dbReference type="ChEBI" id="CHEBI:456215"/>
        <dbReference type="EC" id="6.1.1.16"/>
    </reaction>
</comment>
<comment type="cofactor">
    <cofactor evidence="1">
        <name>Zn(2+)</name>
        <dbReference type="ChEBI" id="CHEBI:29105"/>
    </cofactor>
    <text evidence="1">Binds 1 zinc ion per subunit.</text>
</comment>
<comment type="subunit">
    <text evidence="1">Monomer.</text>
</comment>
<comment type="subcellular location">
    <subcellularLocation>
        <location evidence="1">Cytoplasm</location>
    </subcellularLocation>
</comment>
<comment type="similarity">
    <text evidence="1">Belongs to the class-I aminoacyl-tRNA synthetase family.</text>
</comment>